<sequence length="239" mass="25589">MARTKKANDEVPTDSDSLKLKVAKQAAKLVKDEMVVGLGSGSTANLFIQELGKRIVEEELYIYGVPTSFDSRMVASTAGIPLISLDQCGEIDLAIDGADEVCKSTLALIKGGGGCHTMEKIVDYYAKEFIVLADEGKLVDSLGDKTPVPLEVIPFAYSTVLNKLLKLNTAPAIRSGSGKMGPVITDSGNMIIDVFMSIEDAEETEIMLNNIPGVLENGVFSKCDKVLVGTSKKVEILKK</sequence>
<accession>A6VGC9</accession>
<dbReference type="EC" id="5.3.1.6" evidence="1"/>
<dbReference type="EMBL" id="CP000745">
    <property type="protein sequence ID" value="ABR65505.1"/>
    <property type="molecule type" value="Genomic_DNA"/>
</dbReference>
<dbReference type="SMR" id="A6VGC9"/>
<dbReference type="STRING" id="426368.MmarC7_0436"/>
<dbReference type="KEGG" id="mmz:MmarC7_0436"/>
<dbReference type="eggNOG" id="arCOG01122">
    <property type="taxonomic scope" value="Archaea"/>
</dbReference>
<dbReference type="HOGENOM" id="CLU_056590_1_1_2"/>
<dbReference type="OrthoDB" id="19013at2157"/>
<dbReference type="UniPathway" id="UPA00115">
    <property type="reaction ID" value="UER00412"/>
</dbReference>
<dbReference type="GO" id="GO:0005829">
    <property type="term" value="C:cytosol"/>
    <property type="evidence" value="ECO:0007669"/>
    <property type="project" value="TreeGrafter"/>
</dbReference>
<dbReference type="GO" id="GO:0004751">
    <property type="term" value="F:ribose-5-phosphate isomerase activity"/>
    <property type="evidence" value="ECO:0007669"/>
    <property type="project" value="UniProtKB-UniRule"/>
</dbReference>
<dbReference type="GO" id="GO:0006014">
    <property type="term" value="P:D-ribose metabolic process"/>
    <property type="evidence" value="ECO:0007669"/>
    <property type="project" value="TreeGrafter"/>
</dbReference>
<dbReference type="GO" id="GO:0009052">
    <property type="term" value="P:pentose-phosphate shunt, non-oxidative branch"/>
    <property type="evidence" value="ECO:0007669"/>
    <property type="project" value="UniProtKB-UniRule"/>
</dbReference>
<dbReference type="CDD" id="cd01398">
    <property type="entry name" value="RPI_A"/>
    <property type="match status" value="1"/>
</dbReference>
<dbReference type="FunFam" id="3.40.50.1360:FF:000001">
    <property type="entry name" value="Ribose-5-phosphate isomerase A"/>
    <property type="match status" value="1"/>
</dbReference>
<dbReference type="Gene3D" id="3.30.70.260">
    <property type="match status" value="1"/>
</dbReference>
<dbReference type="Gene3D" id="3.40.50.1360">
    <property type="match status" value="1"/>
</dbReference>
<dbReference type="HAMAP" id="MF_00170">
    <property type="entry name" value="Rib_5P_isom_A"/>
    <property type="match status" value="1"/>
</dbReference>
<dbReference type="InterPro" id="IPR037171">
    <property type="entry name" value="NagB/RpiA_transferase-like"/>
</dbReference>
<dbReference type="InterPro" id="IPR020672">
    <property type="entry name" value="Ribose5P_isomerase_typA_subgr"/>
</dbReference>
<dbReference type="InterPro" id="IPR004788">
    <property type="entry name" value="Ribose5P_isomerase_type_A"/>
</dbReference>
<dbReference type="NCBIfam" id="NF001924">
    <property type="entry name" value="PRK00702.1"/>
    <property type="match status" value="1"/>
</dbReference>
<dbReference type="NCBIfam" id="TIGR00021">
    <property type="entry name" value="rpiA"/>
    <property type="match status" value="1"/>
</dbReference>
<dbReference type="PANTHER" id="PTHR11934">
    <property type="entry name" value="RIBOSE-5-PHOSPHATE ISOMERASE"/>
    <property type="match status" value="1"/>
</dbReference>
<dbReference type="PANTHER" id="PTHR11934:SF0">
    <property type="entry name" value="RIBOSE-5-PHOSPHATE ISOMERASE"/>
    <property type="match status" value="1"/>
</dbReference>
<dbReference type="Pfam" id="PF06026">
    <property type="entry name" value="Rib_5-P_isom_A"/>
    <property type="match status" value="1"/>
</dbReference>
<dbReference type="SUPFAM" id="SSF75445">
    <property type="entry name" value="D-ribose-5-phosphate isomerase (RpiA), lid domain"/>
    <property type="match status" value="1"/>
</dbReference>
<dbReference type="SUPFAM" id="SSF100950">
    <property type="entry name" value="NagB/RpiA/CoA transferase-like"/>
    <property type="match status" value="1"/>
</dbReference>
<organism>
    <name type="scientific">Methanococcus maripaludis (strain C7 / ATCC BAA-1331)</name>
    <dbReference type="NCBI Taxonomy" id="426368"/>
    <lineage>
        <taxon>Archaea</taxon>
        <taxon>Methanobacteriati</taxon>
        <taxon>Methanobacteriota</taxon>
        <taxon>Methanomada group</taxon>
        <taxon>Methanococci</taxon>
        <taxon>Methanococcales</taxon>
        <taxon>Methanococcaceae</taxon>
        <taxon>Methanococcus</taxon>
    </lineage>
</organism>
<keyword id="KW-0413">Isomerase</keyword>
<proteinExistence type="inferred from homology"/>
<protein>
    <recommendedName>
        <fullName evidence="1">Ribose-5-phosphate isomerase A</fullName>
        <ecNumber evidence="1">5.3.1.6</ecNumber>
    </recommendedName>
    <alternativeName>
        <fullName evidence="1">Phosphoriboisomerase A</fullName>
        <shortName evidence="1">PRI</shortName>
    </alternativeName>
</protein>
<feature type="chain" id="PRO_1000016949" description="Ribose-5-phosphate isomerase A">
    <location>
        <begin position="1"/>
        <end position="239"/>
    </location>
</feature>
<feature type="active site" description="Proton acceptor" evidence="1">
    <location>
        <position position="119"/>
    </location>
</feature>
<feature type="binding site" evidence="1">
    <location>
        <begin position="40"/>
        <end position="43"/>
    </location>
    <ligand>
        <name>substrate</name>
    </ligand>
</feature>
<feature type="binding site" evidence="1">
    <location>
        <begin position="96"/>
        <end position="99"/>
    </location>
    <ligand>
        <name>substrate</name>
    </ligand>
</feature>
<feature type="binding site" evidence="1">
    <location>
        <begin position="110"/>
        <end position="113"/>
    </location>
    <ligand>
        <name>substrate</name>
    </ligand>
</feature>
<feature type="binding site" evidence="1">
    <location>
        <position position="137"/>
    </location>
    <ligand>
        <name>substrate</name>
    </ligand>
</feature>
<reference key="1">
    <citation type="submission" date="2007-06" db="EMBL/GenBank/DDBJ databases">
        <title>Complete sequence of Methanococcus maripaludis C7.</title>
        <authorList>
            <consortium name="US DOE Joint Genome Institute"/>
            <person name="Copeland A."/>
            <person name="Lucas S."/>
            <person name="Lapidus A."/>
            <person name="Barry K."/>
            <person name="Glavina del Rio T."/>
            <person name="Dalin E."/>
            <person name="Tice H."/>
            <person name="Pitluck S."/>
            <person name="Clum A."/>
            <person name="Schmutz J."/>
            <person name="Larimer F."/>
            <person name="Land M."/>
            <person name="Hauser L."/>
            <person name="Kyrpides N."/>
            <person name="Anderson I."/>
            <person name="Sieprawska-Lupa M."/>
            <person name="Whitman W.B."/>
            <person name="Richardson P."/>
        </authorList>
    </citation>
    <scope>NUCLEOTIDE SEQUENCE [LARGE SCALE GENOMIC DNA]</scope>
    <source>
        <strain>C7 / ATCC BAA-1331</strain>
    </source>
</reference>
<evidence type="ECO:0000255" key="1">
    <source>
        <dbReference type="HAMAP-Rule" id="MF_00170"/>
    </source>
</evidence>
<gene>
    <name evidence="1" type="primary">rpiA</name>
    <name type="ordered locus">MmarC7_0436</name>
</gene>
<name>RPIA_METM7</name>
<comment type="function">
    <text evidence="1">Catalyzes the reversible conversion of ribose-5-phosphate to ribulose 5-phosphate.</text>
</comment>
<comment type="catalytic activity">
    <reaction evidence="1">
        <text>aldehydo-D-ribose 5-phosphate = D-ribulose 5-phosphate</text>
        <dbReference type="Rhea" id="RHEA:14657"/>
        <dbReference type="ChEBI" id="CHEBI:58121"/>
        <dbReference type="ChEBI" id="CHEBI:58273"/>
        <dbReference type="EC" id="5.3.1.6"/>
    </reaction>
</comment>
<comment type="pathway">
    <text evidence="1">Carbohydrate degradation; pentose phosphate pathway; D-ribose 5-phosphate from D-ribulose 5-phosphate (non-oxidative stage): step 1/1.</text>
</comment>
<comment type="subunit">
    <text evidence="1">Homodimer.</text>
</comment>
<comment type="similarity">
    <text evidence="1">Belongs to the ribose 5-phosphate isomerase family.</text>
</comment>